<reference key="1">
    <citation type="journal article" date="2001" name="Nature">
        <title>Complete genome sequence of Salmonella enterica serovar Typhimurium LT2.</title>
        <authorList>
            <person name="McClelland M."/>
            <person name="Sanderson K.E."/>
            <person name="Spieth J."/>
            <person name="Clifton S.W."/>
            <person name="Latreille P."/>
            <person name="Courtney L."/>
            <person name="Porwollik S."/>
            <person name="Ali J."/>
            <person name="Dante M."/>
            <person name="Du F."/>
            <person name="Hou S."/>
            <person name="Layman D."/>
            <person name="Leonard S."/>
            <person name="Nguyen C."/>
            <person name="Scott K."/>
            <person name="Holmes A."/>
            <person name="Grewal N."/>
            <person name="Mulvaney E."/>
            <person name="Ryan E."/>
            <person name="Sun H."/>
            <person name="Florea L."/>
            <person name="Miller W."/>
            <person name="Stoneking T."/>
            <person name="Nhan M."/>
            <person name="Waterston R."/>
            <person name="Wilson R.K."/>
        </authorList>
    </citation>
    <scope>NUCLEOTIDE SEQUENCE [LARGE SCALE GENOMIC DNA]</scope>
    <source>
        <strain>LT2 / SGSC1412 / ATCC 700720</strain>
    </source>
</reference>
<proteinExistence type="inferred from homology"/>
<dbReference type="EC" id="2.4.2.29" evidence="1"/>
<dbReference type="EMBL" id="AE006468">
    <property type="protein sequence ID" value="AAL19359.1"/>
    <property type="molecule type" value="Genomic_DNA"/>
</dbReference>
<dbReference type="RefSeq" id="NP_459400.1">
    <property type="nucleotide sequence ID" value="NC_003197.2"/>
</dbReference>
<dbReference type="RefSeq" id="WP_000667305.1">
    <property type="nucleotide sequence ID" value="NC_003197.2"/>
</dbReference>
<dbReference type="SMR" id="Q8ZRD8"/>
<dbReference type="STRING" id="99287.STM0405"/>
<dbReference type="PaxDb" id="99287-STM0405"/>
<dbReference type="GeneID" id="1251924"/>
<dbReference type="KEGG" id="stm:STM0405"/>
<dbReference type="PATRIC" id="fig|99287.12.peg.432"/>
<dbReference type="HOGENOM" id="CLU_022060_0_1_6"/>
<dbReference type="OMA" id="IDLFDCV"/>
<dbReference type="PhylomeDB" id="Q8ZRD8"/>
<dbReference type="BioCyc" id="SENT99287:STM0405-MONOMER"/>
<dbReference type="UniPathway" id="UPA00392"/>
<dbReference type="Proteomes" id="UP000001014">
    <property type="component" value="Chromosome"/>
</dbReference>
<dbReference type="GO" id="GO:0005737">
    <property type="term" value="C:cytoplasm"/>
    <property type="evidence" value="ECO:0000318"/>
    <property type="project" value="GO_Central"/>
</dbReference>
<dbReference type="GO" id="GO:0005829">
    <property type="term" value="C:cytosol"/>
    <property type="evidence" value="ECO:0000318"/>
    <property type="project" value="GO_Central"/>
</dbReference>
<dbReference type="GO" id="GO:0046872">
    <property type="term" value="F:metal ion binding"/>
    <property type="evidence" value="ECO:0007669"/>
    <property type="project" value="UniProtKB-KW"/>
</dbReference>
<dbReference type="GO" id="GO:0008479">
    <property type="term" value="F:tRNA-guanosine(34) queuine transglycosylase activity"/>
    <property type="evidence" value="ECO:0007669"/>
    <property type="project" value="UniProtKB-UniRule"/>
</dbReference>
<dbReference type="GO" id="GO:0008616">
    <property type="term" value="P:queuosine biosynthetic process"/>
    <property type="evidence" value="ECO:0000318"/>
    <property type="project" value="GO_Central"/>
</dbReference>
<dbReference type="GO" id="GO:0002099">
    <property type="term" value="P:tRNA wobble guanine modification"/>
    <property type="evidence" value="ECO:0000318"/>
    <property type="project" value="GO_Central"/>
</dbReference>
<dbReference type="GO" id="GO:0101030">
    <property type="term" value="P:tRNA-guanine transglycosylation"/>
    <property type="evidence" value="ECO:0007669"/>
    <property type="project" value="InterPro"/>
</dbReference>
<dbReference type="FunFam" id="3.20.20.105:FF:000001">
    <property type="entry name" value="Queuine tRNA-ribosyltransferase"/>
    <property type="match status" value="1"/>
</dbReference>
<dbReference type="Gene3D" id="3.20.20.105">
    <property type="entry name" value="Queuine tRNA-ribosyltransferase-like"/>
    <property type="match status" value="1"/>
</dbReference>
<dbReference type="HAMAP" id="MF_00168">
    <property type="entry name" value="Q_tRNA_Tgt"/>
    <property type="match status" value="1"/>
</dbReference>
<dbReference type="InterPro" id="IPR050076">
    <property type="entry name" value="ArchSynthase1/Queuine_TRR"/>
</dbReference>
<dbReference type="InterPro" id="IPR004803">
    <property type="entry name" value="TGT"/>
</dbReference>
<dbReference type="InterPro" id="IPR036511">
    <property type="entry name" value="TGT-like_sf"/>
</dbReference>
<dbReference type="InterPro" id="IPR002616">
    <property type="entry name" value="tRNA_ribo_trans-like"/>
</dbReference>
<dbReference type="NCBIfam" id="TIGR00430">
    <property type="entry name" value="Q_tRNA_tgt"/>
    <property type="match status" value="1"/>
</dbReference>
<dbReference type="NCBIfam" id="TIGR00449">
    <property type="entry name" value="tgt_general"/>
    <property type="match status" value="1"/>
</dbReference>
<dbReference type="PANTHER" id="PTHR46499">
    <property type="entry name" value="QUEUINE TRNA-RIBOSYLTRANSFERASE"/>
    <property type="match status" value="1"/>
</dbReference>
<dbReference type="PANTHER" id="PTHR46499:SF1">
    <property type="entry name" value="QUEUINE TRNA-RIBOSYLTRANSFERASE"/>
    <property type="match status" value="1"/>
</dbReference>
<dbReference type="Pfam" id="PF01702">
    <property type="entry name" value="TGT"/>
    <property type="match status" value="1"/>
</dbReference>
<dbReference type="SUPFAM" id="SSF51713">
    <property type="entry name" value="tRNA-guanine transglycosylase"/>
    <property type="match status" value="1"/>
</dbReference>
<comment type="function">
    <text evidence="1">Catalyzes the base-exchange of a guanine (G) residue with the queuine precursor 7-aminomethyl-7-deazaguanine (PreQ1) at position 34 (anticodon wobble position) in tRNAs with GU(N) anticodons (tRNA-Asp, -Asn, -His and -Tyr). Catalysis occurs through a double-displacement mechanism. The nucleophile active site attacks the C1' of nucleotide 34 to detach the guanine base from the RNA, forming a covalent enzyme-RNA intermediate. The proton acceptor active site deprotonates the incoming PreQ1, allowing a nucleophilic attack on the C1' of the ribose to form the product. After dissociation, two additional enzymatic reactions on the tRNA convert PreQ1 to queuine (Q), resulting in the hypermodified nucleoside queuosine (7-(((4,5-cis-dihydroxy-2-cyclopenten-1-yl)amino)methyl)-7-deazaguanosine).</text>
</comment>
<comment type="catalytic activity">
    <reaction evidence="1">
        <text>7-aminomethyl-7-carbaguanine + guanosine(34) in tRNA = 7-aminomethyl-7-carbaguanosine(34) in tRNA + guanine</text>
        <dbReference type="Rhea" id="RHEA:24104"/>
        <dbReference type="Rhea" id="RHEA-COMP:10341"/>
        <dbReference type="Rhea" id="RHEA-COMP:10342"/>
        <dbReference type="ChEBI" id="CHEBI:16235"/>
        <dbReference type="ChEBI" id="CHEBI:58703"/>
        <dbReference type="ChEBI" id="CHEBI:74269"/>
        <dbReference type="ChEBI" id="CHEBI:82833"/>
        <dbReference type="EC" id="2.4.2.29"/>
    </reaction>
</comment>
<comment type="cofactor">
    <cofactor evidence="1">
        <name>Zn(2+)</name>
        <dbReference type="ChEBI" id="CHEBI:29105"/>
    </cofactor>
    <text evidence="1">Binds 1 zinc ion per subunit.</text>
</comment>
<comment type="pathway">
    <text evidence="1">tRNA modification; tRNA-queuosine biosynthesis.</text>
</comment>
<comment type="subunit">
    <text evidence="1">Homodimer. Within each dimer, one monomer is responsible for RNA recognition and catalysis, while the other monomer binds to the replacement base PreQ1.</text>
</comment>
<comment type="similarity">
    <text evidence="1">Belongs to the queuine tRNA-ribosyltransferase family.</text>
</comment>
<gene>
    <name evidence="1" type="primary">tgt</name>
    <name type="ordered locus">STM0405</name>
</gene>
<name>TGT_SALTY</name>
<evidence type="ECO:0000255" key="1">
    <source>
        <dbReference type="HAMAP-Rule" id="MF_00168"/>
    </source>
</evidence>
<feature type="chain" id="PRO_0000135518" description="Queuine tRNA-ribosyltransferase">
    <location>
        <begin position="1"/>
        <end position="375"/>
    </location>
</feature>
<feature type="region of interest" description="RNA binding" evidence="1">
    <location>
        <begin position="245"/>
        <end position="251"/>
    </location>
</feature>
<feature type="region of interest" description="RNA binding; important for wobble base 34 recognition" evidence="1">
    <location>
        <begin position="269"/>
        <end position="273"/>
    </location>
</feature>
<feature type="active site" description="Proton acceptor" evidence="1">
    <location>
        <position position="89"/>
    </location>
</feature>
<feature type="active site" description="Nucleophile" evidence="1">
    <location>
        <position position="264"/>
    </location>
</feature>
<feature type="binding site" evidence="1">
    <location>
        <begin position="89"/>
        <end position="93"/>
    </location>
    <ligand>
        <name>substrate</name>
    </ligand>
</feature>
<feature type="binding site" evidence="1">
    <location>
        <position position="143"/>
    </location>
    <ligand>
        <name>substrate</name>
    </ligand>
</feature>
<feature type="binding site" evidence="1">
    <location>
        <position position="187"/>
    </location>
    <ligand>
        <name>substrate</name>
    </ligand>
</feature>
<feature type="binding site" evidence="1">
    <location>
        <position position="214"/>
    </location>
    <ligand>
        <name>substrate</name>
    </ligand>
</feature>
<feature type="binding site" evidence="1">
    <location>
        <position position="302"/>
    </location>
    <ligand>
        <name>Zn(2+)</name>
        <dbReference type="ChEBI" id="CHEBI:29105"/>
    </ligand>
</feature>
<feature type="binding site" evidence="1">
    <location>
        <position position="304"/>
    </location>
    <ligand>
        <name>Zn(2+)</name>
        <dbReference type="ChEBI" id="CHEBI:29105"/>
    </ligand>
</feature>
<feature type="binding site" evidence="1">
    <location>
        <position position="307"/>
    </location>
    <ligand>
        <name>Zn(2+)</name>
        <dbReference type="ChEBI" id="CHEBI:29105"/>
    </ligand>
</feature>
<feature type="binding site" evidence="1">
    <location>
        <position position="333"/>
    </location>
    <ligand>
        <name>Zn(2+)</name>
        <dbReference type="ChEBI" id="CHEBI:29105"/>
    </ligand>
</feature>
<accession>Q8ZRD8</accession>
<organism>
    <name type="scientific">Salmonella typhimurium (strain LT2 / SGSC1412 / ATCC 700720)</name>
    <dbReference type="NCBI Taxonomy" id="99287"/>
    <lineage>
        <taxon>Bacteria</taxon>
        <taxon>Pseudomonadati</taxon>
        <taxon>Pseudomonadota</taxon>
        <taxon>Gammaproteobacteria</taxon>
        <taxon>Enterobacterales</taxon>
        <taxon>Enterobacteriaceae</taxon>
        <taxon>Salmonella</taxon>
    </lineage>
</organism>
<sequence>MKFELDTTDGRARRGRLVFDRGVVETPAFMPVGTYGTVKGMTPEEVEATGAQIILGNTFHLWLRPGQEIMKLHGDLHDFMQWKGPILTDSGGFQVFSLGDIRKITEQGVHFRNPINGDPIFLDPEKSMEIQYDLGSDIVMIFDECTPYPADWDYAKRSMEMSLRWAKRSRDRFDSLGNKNALFGIIQGSVYEDLRDISVKGLVEIGFDGYAVGGLAVGEPKADMHRILEHVCPQIPADKPRYLMGVGKPEDLVEGVRRGIDMFDCVMPTRNARNGHLFVTDGVVKIRNAKHKSDTSPLDAECDCYTCRNYSRAYLHHLDRCNEILGARLNTIHNLRYYQRLMAGLRKAIEEGKLESFVTEFYQRQGRPVPPLNVD</sequence>
<protein>
    <recommendedName>
        <fullName evidence="1">Queuine tRNA-ribosyltransferase</fullName>
        <ecNumber evidence="1">2.4.2.29</ecNumber>
    </recommendedName>
    <alternativeName>
        <fullName evidence="1">Guanine insertion enzyme</fullName>
    </alternativeName>
    <alternativeName>
        <fullName evidence="1">tRNA-guanine transglycosylase</fullName>
    </alternativeName>
</protein>
<keyword id="KW-0328">Glycosyltransferase</keyword>
<keyword id="KW-0479">Metal-binding</keyword>
<keyword id="KW-0671">Queuosine biosynthesis</keyword>
<keyword id="KW-1185">Reference proteome</keyword>
<keyword id="KW-0808">Transferase</keyword>
<keyword id="KW-0819">tRNA processing</keyword>
<keyword id="KW-0862">Zinc</keyword>